<protein>
    <recommendedName>
        <fullName>N(4)-(Beta-N-acetylglucosaminyl)-L-asparaginase</fullName>
        <ecNumber evidence="3 4">3.5.1.26</ecNumber>
    </recommendedName>
    <alternativeName>
        <fullName>Aspartylglucosaminidase</fullName>
        <shortName>AGA</shortName>
    </alternativeName>
    <alternativeName>
        <fullName>Glycosylasparaginase</fullName>
    </alternativeName>
    <alternativeName>
        <fullName>N4-(N-acetyl-beta-glucosaminyl)-L-asparagine amidase</fullName>
    </alternativeName>
    <component>
        <recommendedName>
            <fullName>Glycosylasparaginase alpha chain</fullName>
        </recommendedName>
    </component>
    <component>
        <recommendedName>
            <fullName>Glycosylasparaginase beta chain</fullName>
        </recommendedName>
    </component>
</protein>
<organism>
    <name type="scientific">Rattus norvegicus</name>
    <name type="common">Rat</name>
    <dbReference type="NCBI Taxonomy" id="10116"/>
    <lineage>
        <taxon>Eukaryota</taxon>
        <taxon>Metazoa</taxon>
        <taxon>Chordata</taxon>
        <taxon>Craniata</taxon>
        <taxon>Vertebrata</taxon>
        <taxon>Euteleostomi</taxon>
        <taxon>Mammalia</taxon>
        <taxon>Eutheria</taxon>
        <taxon>Euarchontoglires</taxon>
        <taxon>Glires</taxon>
        <taxon>Rodentia</taxon>
        <taxon>Myomorpha</taxon>
        <taxon>Muroidea</taxon>
        <taxon>Muridae</taxon>
        <taxon>Murinae</taxon>
        <taxon>Rattus</taxon>
    </lineage>
</organism>
<name>ASPG_RAT</name>
<dbReference type="EC" id="3.5.1.26" evidence="3 4"/>
<dbReference type="EMBL" id="BC098718">
    <property type="protein sequence ID" value="AAH98718.1"/>
    <property type="molecule type" value="mRNA"/>
</dbReference>
<dbReference type="PIR" id="S04228">
    <property type="entry name" value="S04228"/>
</dbReference>
<dbReference type="PIR" id="S04229">
    <property type="entry name" value="S04229"/>
</dbReference>
<dbReference type="PIR" id="S57865">
    <property type="entry name" value="S57865"/>
</dbReference>
<dbReference type="RefSeq" id="NP_001026811.1">
    <property type="nucleotide sequence ID" value="NM_001031641.1"/>
</dbReference>
<dbReference type="SMR" id="P30919"/>
<dbReference type="FunCoup" id="P30919">
    <property type="interactions" value="1046"/>
</dbReference>
<dbReference type="STRING" id="10116.ENSRNOP00000000120"/>
<dbReference type="MEROPS" id="T02.001"/>
<dbReference type="GlyCosmos" id="P30919">
    <property type="glycosylation" value="3 sites, No reported glycans"/>
</dbReference>
<dbReference type="GlyGen" id="P30919">
    <property type="glycosylation" value="3 sites"/>
</dbReference>
<dbReference type="iPTMnet" id="P30919"/>
<dbReference type="PhosphoSitePlus" id="P30919"/>
<dbReference type="jPOST" id="P30919"/>
<dbReference type="PaxDb" id="10116-ENSRNOP00000000120"/>
<dbReference type="Ensembl" id="ENSRNOT00000000120.4">
    <property type="protein sequence ID" value="ENSRNOP00000000120.3"/>
    <property type="gene ID" value="ENSRNOG00000000108.4"/>
</dbReference>
<dbReference type="GeneID" id="290923"/>
<dbReference type="KEGG" id="rno:290923"/>
<dbReference type="AGR" id="RGD:1309646"/>
<dbReference type="CTD" id="175"/>
<dbReference type="RGD" id="1309646">
    <property type="gene designation" value="Aga"/>
</dbReference>
<dbReference type="eggNOG" id="KOG1593">
    <property type="taxonomic scope" value="Eukaryota"/>
</dbReference>
<dbReference type="GeneTree" id="ENSGT00950000183045"/>
<dbReference type="HOGENOM" id="CLU_021603_0_0_1"/>
<dbReference type="InParanoid" id="P30919"/>
<dbReference type="OrthoDB" id="188713at2759"/>
<dbReference type="PhylomeDB" id="P30919"/>
<dbReference type="TreeFam" id="TF300756"/>
<dbReference type="Reactome" id="R-RNO-6798695">
    <property type="pathway name" value="Neutrophil degranulation"/>
</dbReference>
<dbReference type="PRO" id="PR:P30919"/>
<dbReference type="Proteomes" id="UP000002494">
    <property type="component" value="Chromosome 16"/>
</dbReference>
<dbReference type="Bgee" id="ENSRNOG00000000108">
    <property type="expression patterns" value="Expressed in pancreas and 19 other cell types or tissues"/>
</dbReference>
<dbReference type="GO" id="GO:0005737">
    <property type="term" value="C:cytoplasm"/>
    <property type="evidence" value="ECO:0000318"/>
    <property type="project" value="GO_Central"/>
</dbReference>
<dbReference type="GO" id="GO:0005783">
    <property type="term" value="C:endoplasmic reticulum"/>
    <property type="evidence" value="ECO:0000266"/>
    <property type="project" value="RGD"/>
</dbReference>
<dbReference type="GO" id="GO:0005615">
    <property type="term" value="C:extracellular space"/>
    <property type="evidence" value="ECO:0000266"/>
    <property type="project" value="RGD"/>
</dbReference>
<dbReference type="GO" id="GO:0005764">
    <property type="term" value="C:lysosome"/>
    <property type="evidence" value="ECO:0000266"/>
    <property type="project" value="RGD"/>
</dbReference>
<dbReference type="GO" id="GO:0042802">
    <property type="term" value="F:identical protein binding"/>
    <property type="evidence" value="ECO:0000314"/>
    <property type="project" value="RGD"/>
</dbReference>
<dbReference type="GO" id="GO:0003948">
    <property type="term" value="F:N4-(beta-N-acetylglucosaminyl)-L-asparaginase activity"/>
    <property type="evidence" value="ECO:0000314"/>
    <property type="project" value="RGD"/>
</dbReference>
<dbReference type="GO" id="GO:0008233">
    <property type="term" value="F:peptidase activity"/>
    <property type="evidence" value="ECO:0007669"/>
    <property type="project" value="UniProtKB-KW"/>
</dbReference>
<dbReference type="GO" id="GO:0006508">
    <property type="term" value="P:proteolysis"/>
    <property type="evidence" value="ECO:0007669"/>
    <property type="project" value="UniProtKB-KW"/>
</dbReference>
<dbReference type="CDD" id="cd04513">
    <property type="entry name" value="Glycosylasparaginase"/>
    <property type="match status" value="1"/>
</dbReference>
<dbReference type="FunFam" id="3.60.20.30:FF:000003">
    <property type="entry name" value="N(4)-(Beta-N-acetylglucosaminyl)-L-asparaginase isoform X1"/>
    <property type="match status" value="1"/>
</dbReference>
<dbReference type="Gene3D" id="3.60.20.30">
    <property type="entry name" value="(Glycosyl)asparaginase"/>
    <property type="match status" value="1"/>
</dbReference>
<dbReference type="InterPro" id="IPR029055">
    <property type="entry name" value="Ntn_hydrolases_N"/>
</dbReference>
<dbReference type="InterPro" id="IPR000246">
    <property type="entry name" value="Peptidase_T2"/>
</dbReference>
<dbReference type="PANTHER" id="PTHR10188">
    <property type="entry name" value="L-ASPARAGINASE"/>
    <property type="match status" value="1"/>
</dbReference>
<dbReference type="PANTHER" id="PTHR10188:SF6">
    <property type="entry name" value="N(4)-(BETA-N-ACETYLGLUCOSAMINYL)-L-ASPARAGINASE"/>
    <property type="match status" value="1"/>
</dbReference>
<dbReference type="Pfam" id="PF01112">
    <property type="entry name" value="Asparaginase_2"/>
    <property type="match status" value="1"/>
</dbReference>
<dbReference type="SUPFAM" id="SSF56235">
    <property type="entry name" value="N-terminal nucleophile aminohydrolases (Ntn hydrolases)"/>
    <property type="match status" value="1"/>
</dbReference>
<sequence>MARKWNLPFLLLPLVLGIPLVRGSNPLPLVVNTWPFKNATEAAWWTLVSGGSALDAVEKGCAMCEKEQCGGTVGFGGSPDEVGETTLDAMIMDGTAMDVGAVGGLRRIKNAIGVARKVLEHTTHTLLVGDSATKFAVSMGFTSEDLSTNTSRALHSDWLSRNCQPNYWRNVIPDPSKYCGPYKPPDFLEQNNRAHKEVDIHSHDTIGMVVIHKTGHTAAGTSTNGLKFKIPGRVGDSPIPGAGAYADDMAGAAAATGDGDTLLRFLPSYQAVEYMRGGDDPARACQKVISRIQKYYPKFFGAVICANVTGSYGAACNRLPTFTQFSFMVYNSLHNQAIEEKVDCM</sequence>
<reference key="1">
    <citation type="journal article" date="2004" name="Genome Res.">
        <title>The status, quality, and expansion of the NIH full-length cDNA project: the Mammalian Gene Collection (MGC).</title>
        <authorList>
            <consortium name="The MGC Project Team"/>
        </authorList>
    </citation>
    <scope>NUCLEOTIDE SEQUENCE [LARGE SCALE MRNA]</scope>
    <source>
        <tissue>Spleen</tissue>
    </source>
</reference>
<reference key="2">
    <citation type="journal article" date="1989" name="Biochem. J.">
        <title>Purification and characterization of rat liver glycosylasparaginase.</title>
        <authorList>
            <person name="Tollersrud O.-K."/>
            <person name="Aronson N.N. Jr."/>
        </authorList>
    </citation>
    <scope>PROTEIN SEQUENCE OF 24-41 AND 205-226</scope>
    <scope>FUNCTION</scope>
    <scope>CATALYTIC ACTIVITY</scope>
    <scope>PROTEOLYTIC CLEAVAGE</scope>
    <scope>GLYCOSYLATION</scope>
    <source>
        <tissue>Liver</tissue>
    </source>
</reference>
<reference key="3">
    <citation type="journal article" date="1992" name="Biochem. J.">
        <title>Comparison of liver glycosylasparaginases from six vertebrates.</title>
        <authorList>
            <person name="Tollersrud O.-K."/>
            <person name="Aronson N.N. Jr."/>
        </authorList>
    </citation>
    <scope>SEQUENCE REVISION</scope>
    <scope>FUNCTION</scope>
    <scope>CATALYTIC ACTIVITY</scope>
    <source>
        <tissue>Liver</tissue>
    </source>
</reference>
<evidence type="ECO:0000250" key="1">
    <source>
        <dbReference type="UniProtKB" id="P20933"/>
    </source>
</evidence>
<evidence type="ECO:0000255" key="2"/>
<evidence type="ECO:0000269" key="3">
    <source>
    </source>
</evidence>
<evidence type="ECO:0000269" key="4">
    <source>
    </source>
</evidence>
<evidence type="ECO:0000305" key="5"/>
<proteinExistence type="evidence at protein level"/>
<comment type="function">
    <text evidence="3 4">Cleaves the GlcNAc-Asn bond which joins oligosaccharides to the peptide of asparagine-linked glycoproteins.</text>
</comment>
<comment type="catalytic activity">
    <reaction evidence="3 4">
        <text>N(4)-(beta-N-acetyl-D-glucosaminyl)-L-asparagine + H2O = N-acetyl-beta-D-glucosaminylamine + L-aspartate + H(+)</text>
        <dbReference type="Rhea" id="RHEA:11544"/>
        <dbReference type="ChEBI" id="CHEBI:15377"/>
        <dbReference type="ChEBI" id="CHEBI:15378"/>
        <dbReference type="ChEBI" id="CHEBI:15947"/>
        <dbReference type="ChEBI" id="CHEBI:29991"/>
        <dbReference type="ChEBI" id="CHEBI:58080"/>
        <dbReference type="EC" id="3.5.1.26"/>
    </reaction>
</comment>
<comment type="subunit">
    <text evidence="1">Heterotetramer of two alpha and two beta chains arranged as a dimer of alpha/beta heterodimers.</text>
</comment>
<comment type="subcellular location">
    <subcellularLocation>
        <location>Lysosome</location>
    </subcellularLocation>
</comment>
<comment type="PTM">
    <text evidence="4">N-glycosylated.</text>
</comment>
<comment type="PTM">
    <text evidence="1 4">Cleaved into an alpha and beta chain by autocatalysis; this activates the enzyme (PubMed:2775174). The N-terminal residue of the beta subunit is responsible for the nucleophile hydrolase activity (By similarity).</text>
</comment>
<comment type="similarity">
    <text evidence="5">Belongs to the Ntn-hydrolase family.</text>
</comment>
<accession>P30919</accession>
<accession>Q4G065</accession>
<gene>
    <name type="primary">Aga</name>
</gene>
<keyword id="KW-0068">Autocatalytic cleavage</keyword>
<keyword id="KW-0903">Direct protein sequencing</keyword>
<keyword id="KW-1015">Disulfide bond</keyword>
<keyword id="KW-0325">Glycoprotein</keyword>
<keyword id="KW-0378">Hydrolase</keyword>
<keyword id="KW-0458">Lysosome</keyword>
<keyword id="KW-0645">Protease</keyword>
<keyword id="KW-1185">Reference proteome</keyword>
<keyword id="KW-0732">Signal</keyword>
<feature type="signal peptide" evidence="4">
    <location>
        <begin position="1"/>
        <end position="23"/>
    </location>
</feature>
<feature type="chain" id="PRO_0000044571" description="Glycosylasparaginase alpha chain">
    <location>
        <begin position="24"/>
        <end position="204"/>
    </location>
</feature>
<feature type="chain" id="PRO_0000044572" description="Glycosylasparaginase beta chain">
    <location>
        <begin position="205"/>
        <end position="345"/>
    </location>
</feature>
<feature type="active site" description="Nucleophile" evidence="1">
    <location>
        <position position="205"/>
    </location>
</feature>
<feature type="binding site" evidence="1">
    <location>
        <begin position="233"/>
        <end position="236"/>
    </location>
    <ligand>
        <name>substrate</name>
    </ligand>
</feature>
<feature type="binding site" evidence="1">
    <location>
        <begin position="256"/>
        <end position="259"/>
    </location>
    <ligand>
        <name>substrate</name>
    </ligand>
</feature>
<feature type="glycosylation site" description="N-linked (GlcNAc...) asparagine" evidence="4">
    <location>
        <position position="38"/>
    </location>
</feature>
<feature type="glycosylation site" description="N-linked (GlcNAc...) asparagine" evidence="2">
    <location>
        <position position="149"/>
    </location>
</feature>
<feature type="glycosylation site" description="N-linked (GlcNAc...) asparagine" evidence="2">
    <location>
        <position position="307"/>
    </location>
</feature>
<feature type="disulfide bond" evidence="1">
    <location>
        <begin position="64"/>
        <end position="69"/>
    </location>
</feature>
<feature type="disulfide bond" evidence="1">
    <location>
        <begin position="163"/>
        <end position="179"/>
    </location>
</feature>
<feature type="disulfide bond" evidence="1">
    <location>
        <begin position="285"/>
        <end position="305"/>
    </location>
</feature>
<feature type="disulfide bond" evidence="1">
    <location>
        <begin position="316"/>
        <end position="344"/>
    </location>
</feature>